<gene>
    <name evidence="1" type="primary">hemF</name>
    <name type="ordered locus">CCNA_00540</name>
</gene>
<reference key="1">
    <citation type="journal article" date="2010" name="J. Bacteriol.">
        <title>The genetic basis of laboratory adaptation in Caulobacter crescentus.</title>
        <authorList>
            <person name="Marks M.E."/>
            <person name="Castro-Rojas C.M."/>
            <person name="Teiling C."/>
            <person name="Du L."/>
            <person name="Kapatral V."/>
            <person name="Walunas T.L."/>
            <person name="Crosson S."/>
        </authorList>
    </citation>
    <scope>NUCLEOTIDE SEQUENCE [LARGE SCALE GENOMIC DNA]</scope>
    <source>
        <strain>NA1000 / CB15N</strain>
    </source>
</reference>
<keyword id="KW-0963">Cytoplasm</keyword>
<keyword id="KW-0350">Heme biosynthesis</keyword>
<keyword id="KW-0479">Metal-binding</keyword>
<keyword id="KW-0560">Oxidoreductase</keyword>
<keyword id="KW-0627">Porphyrin biosynthesis</keyword>
<keyword id="KW-1185">Reference proteome</keyword>
<organism>
    <name type="scientific">Caulobacter vibrioides (strain NA1000 / CB15N)</name>
    <name type="common">Caulobacter crescentus</name>
    <dbReference type="NCBI Taxonomy" id="565050"/>
    <lineage>
        <taxon>Bacteria</taxon>
        <taxon>Pseudomonadati</taxon>
        <taxon>Pseudomonadota</taxon>
        <taxon>Alphaproteobacteria</taxon>
        <taxon>Caulobacterales</taxon>
        <taxon>Caulobacteraceae</taxon>
        <taxon>Caulobacter</taxon>
    </lineage>
</organism>
<comment type="function">
    <text evidence="1">Involved in the heme biosynthesis. Catalyzes the aerobic oxidative decarboxylation of propionate groups of rings A and B of coproporphyrinogen-III to yield the vinyl groups in protoporphyrinogen-IX.</text>
</comment>
<comment type="catalytic activity">
    <reaction evidence="1">
        <text>coproporphyrinogen III + O2 + 2 H(+) = protoporphyrinogen IX + 2 CO2 + 2 H2O</text>
        <dbReference type="Rhea" id="RHEA:18257"/>
        <dbReference type="ChEBI" id="CHEBI:15377"/>
        <dbReference type="ChEBI" id="CHEBI:15378"/>
        <dbReference type="ChEBI" id="CHEBI:15379"/>
        <dbReference type="ChEBI" id="CHEBI:16526"/>
        <dbReference type="ChEBI" id="CHEBI:57307"/>
        <dbReference type="ChEBI" id="CHEBI:57309"/>
        <dbReference type="EC" id="1.3.3.3"/>
    </reaction>
</comment>
<comment type="cofactor">
    <cofactor evidence="1">
        <name>a divalent metal cation</name>
        <dbReference type="ChEBI" id="CHEBI:60240"/>
    </cofactor>
</comment>
<comment type="pathway">
    <text evidence="1">Porphyrin-containing compound metabolism; protoporphyrin-IX biosynthesis; protoporphyrinogen-IX from coproporphyrinogen-III (O2 route): step 1/1.</text>
</comment>
<comment type="subunit">
    <text evidence="1">Homodimer.</text>
</comment>
<comment type="subcellular location">
    <subcellularLocation>
        <location evidence="1">Cytoplasm</location>
    </subcellularLocation>
</comment>
<comment type="similarity">
    <text evidence="1">Belongs to the aerobic coproporphyrinogen-III oxidase family.</text>
</comment>
<sequence length="290" mass="32788">MSTDQDLDTKKAAARAWFESLRDQICAAFEQLEDEAPADLYPGAPGRFAKKAWDRPAGGGGVMGMMHGRLFEKVGVHVSTVFGTFTPEMAKTMPGAAEDPRFFATGISLIAHMTNPRVPAVHMNTRFIATTKSWFGGGGDLTPLLGYQRQQDFPDAIDFHAAYKRACDKYDPEWHPKYKAWCDEYFFLPHRNEPRGIGGIFYDHHDSGDWARDFAFTQDVGRAFLEIYPTLVRRRMGEAWTADEREQQLIQRGRYVEFNLLYDRGTMFGLKTGGNVESILSSMPPAVKWP</sequence>
<accession>B8GZX1</accession>
<feature type="chain" id="PRO_1000133176" description="Oxygen-dependent coproporphyrinogen-III oxidase">
    <location>
        <begin position="1"/>
        <end position="290"/>
    </location>
</feature>
<feature type="region of interest" description="Important for dimerization" evidence="1">
    <location>
        <begin position="255"/>
        <end position="290"/>
    </location>
</feature>
<feature type="active site" description="Proton donor" evidence="1">
    <location>
        <position position="122"/>
    </location>
</feature>
<feature type="binding site" evidence="1">
    <location>
        <position position="108"/>
    </location>
    <ligand>
        <name>substrate</name>
    </ligand>
</feature>
<feature type="binding site" evidence="1">
    <location>
        <position position="112"/>
    </location>
    <ligand>
        <name>a divalent metal cation</name>
        <dbReference type="ChEBI" id="CHEBI:60240"/>
    </ligand>
</feature>
<feature type="binding site" evidence="1">
    <location>
        <position position="122"/>
    </location>
    <ligand>
        <name>a divalent metal cation</name>
        <dbReference type="ChEBI" id="CHEBI:60240"/>
    </ligand>
</feature>
<feature type="binding site" evidence="1">
    <location>
        <begin position="124"/>
        <end position="126"/>
    </location>
    <ligand>
        <name>substrate</name>
    </ligand>
</feature>
<feature type="binding site" evidence="1">
    <location>
        <position position="160"/>
    </location>
    <ligand>
        <name>a divalent metal cation</name>
        <dbReference type="ChEBI" id="CHEBI:60240"/>
    </ligand>
</feature>
<feature type="binding site" evidence="1">
    <location>
        <position position="190"/>
    </location>
    <ligand>
        <name>a divalent metal cation</name>
        <dbReference type="ChEBI" id="CHEBI:60240"/>
    </ligand>
</feature>
<feature type="binding site" evidence="1">
    <location>
        <begin position="273"/>
        <end position="275"/>
    </location>
    <ligand>
        <name>substrate</name>
    </ligand>
</feature>
<feature type="site" description="Important for dimerization" evidence="1">
    <location>
        <position position="190"/>
    </location>
</feature>
<evidence type="ECO:0000255" key="1">
    <source>
        <dbReference type="HAMAP-Rule" id="MF_00333"/>
    </source>
</evidence>
<proteinExistence type="inferred from homology"/>
<dbReference type="EC" id="1.3.3.3" evidence="1"/>
<dbReference type="EMBL" id="CP001340">
    <property type="protein sequence ID" value="ACL94005.1"/>
    <property type="molecule type" value="Genomic_DNA"/>
</dbReference>
<dbReference type="RefSeq" id="WP_010918394.1">
    <property type="nucleotide sequence ID" value="NC_011916.1"/>
</dbReference>
<dbReference type="RefSeq" id="YP_002515913.1">
    <property type="nucleotide sequence ID" value="NC_011916.1"/>
</dbReference>
<dbReference type="SMR" id="B8GZX1"/>
<dbReference type="GeneID" id="7332230"/>
<dbReference type="KEGG" id="ccs:CCNA_00540"/>
<dbReference type="PATRIC" id="fig|565050.3.peg.533"/>
<dbReference type="HOGENOM" id="CLU_026169_0_1_5"/>
<dbReference type="OrthoDB" id="9777553at2"/>
<dbReference type="PhylomeDB" id="B8GZX1"/>
<dbReference type="UniPathway" id="UPA00251">
    <property type="reaction ID" value="UER00322"/>
</dbReference>
<dbReference type="Proteomes" id="UP000001364">
    <property type="component" value="Chromosome"/>
</dbReference>
<dbReference type="GO" id="GO:0005737">
    <property type="term" value="C:cytoplasm"/>
    <property type="evidence" value="ECO:0007669"/>
    <property type="project" value="UniProtKB-SubCell"/>
</dbReference>
<dbReference type="GO" id="GO:0004109">
    <property type="term" value="F:coproporphyrinogen oxidase activity"/>
    <property type="evidence" value="ECO:0007669"/>
    <property type="project" value="UniProtKB-UniRule"/>
</dbReference>
<dbReference type="GO" id="GO:0046872">
    <property type="term" value="F:metal ion binding"/>
    <property type="evidence" value="ECO:0007669"/>
    <property type="project" value="UniProtKB-KW"/>
</dbReference>
<dbReference type="GO" id="GO:0042803">
    <property type="term" value="F:protein homodimerization activity"/>
    <property type="evidence" value="ECO:0000250"/>
    <property type="project" value="UniProtKB"/>
</dbReference>
<dbReference type="GO" id="GO:0006782">
    <property type="term" value="P:protoporphyrinogen IX biosynthetic process"/>
    <property type="evidence" value="ECO:0007669"/>
    <property type="project" value="UniProtKB-UniRule"/>
</dbReference>
<dbReference type="FunFam" id="3.40.1500.10:FF:000005">
    <property type="entry name" value="Oxygen-dependent coproporphyrinogen-III oxidase"/>
    <property type="match status" value="1"/>
</dbReference>
<dbReference type="Gene3D" id="3.40.1500.10">
    <property type="entry name" value="Coproporphyrinogen III oxidase, aerobic"/>
    <property type="match status" value="1"/>
</dbReference>
<dbReference type="HAMAP" id="MF_00333">
    <property type="entry name" value="Coprogen_oxidas"/>
    <property type="match status" value="1"/>
</dbReference>
<dbReference type="InterPro" id="IPR001260">
    <property type="entry name" value="Coprogen_oxidase_aer"/>
</dbReference>
<dbReference type="InterPro" id="IPR036406">
    <property type="entry name" value="Coprogen_oxidase_aer_sf"/>
</dbReference>
<dbReference type="InterPro" id="IPR018375">
    <property type="entry name" value="Coprogen_oxidase_CS"/>
</dbReference>
<dbReference type="NCBIfam" id="NF003727">
    <property type="entry name" value="PRK05330.1"/>
    <property type="match status" value="1"/>
</dbReference>
<dbReference type="PANTHER" id="PTHR10755">
    <property type="entry name" value="COPROPORPHYRINOGEN III OXIDASE, MITOCHONDRIAL"/>
    <property type="match status" value="1"/>
</dbReference>
<dbReference type="PANTHER" id="PTHR10755:SF0">
    <property type="entry name" value="OXYGEN-DEPENDENT COPROPORPHYRINOGEN-III OXIDASE, MITOCHONDRIAL"/>
    <property type="match status" value="1"/>
</dbReference>
<dbReference type="Pfam" id="PF01218">
    <property type="entry name" value="Coprogen_oxidas"/>
    <property type="match status" value="1"/>
</dbReference>
<dbReference type="PIRSF" id="PIRSF000166">
    <property type="entry name" value="Coproporphyri_ox"/>
    <property type="match status" value="1"/>
</dbReference>
<dbReference type="PRINTS" id="PR00073">
    <property type="entry name" value="COPRGNOXDASE"/>
</dbReference>
<dbReference type="SUPFAM" id="SSF102886">
    <property type="entry name" value="Coproporphyrinogen III oxidase"/>
    <property type="match status" value="1"/>
</dbReference>
<dbReference type="PROSITE" id="PS01021">
    <property type="entry name" value="COPROGEN_OXIDASE"/>
    <property type="match status" value="1"/>
</dbReference>
<protein>
    <recommendedName>
        <fullName evidence="1">Oxygen-dependent coproporphyrinogen-III oxidase</fullName>
        <shortName evidence="1">CPO</shortName>
        <shortName evidence="1">Coprogen oxidase</shortName>
        <shortName evidence="1">Coproporphyrinogenase</shortName>
        <ecNumber evidence="1">1.3.3.3</ecNumber>
    </recommendedName>
</protein>
<name>HEM6_CAUVN</name>